<feature type="chain" id="PRO_0000110171" description="Fluoride-specific ion channel FluC">
    <location>
        <begin position="1"/>
        <end position="127"/>
    </location>
</feature>
<feature type="transmembrane region" description="Helical" evidence="1">
    <location>
        <begin position="4"/>
        <end position="24"/>
    </location>
</feature>
<feature type="transmembrane region" description="Helical" evidence="1">
    <location>
        <begin position="35"/>
        <end position="55"/>
    </location>
</feature>
<feature type="transmembrane region" description="Helical" evidence="1">
    <location>
        <begin position="71"/>
        <end position="91"/>
    </location>
</feature>
<feature type="transmembrane region" description="Helical" evidence="1">
    <location>
        <begin position="103"/>
        <end position="123"/>
    </location>
</feature>
<feature type="binding site" evidence="1">
    <location>
        <position position="75"/>
    </location>
    <ligand>
        <name>Na(+)</name>
        <dbReference type="ChEBI" id="CHEBI:29101"/>
        <note>structural</note>
    </ligand>
</feature>
<feature type="binding site" evidence="1">
    <location>
        <position position="78"/>
    </location>
    <ligand>
        <name>Na(+)</name>
        <dbReference type="ChEBI" id="CHEBI:29101"/>
        <note>structural</note>
    </ligand>
</feature>
<comment type="function">
    <text evidence="1">Fluoride-specific ion channel. Important for reducing fluoride concentration in the cell, thus reducing its toxicity.</text>
</comment>
<comment type="catalytic activity">
    <reaction evidence="1">
        <text>fluoride(in) = fluoride(out)</text>
        <dbReference type="Rhea" id="RHEA:76159"/>
        <dbReference type="ChEBI" id="CHEBI:17051"/>
    </reaction>
    <physiologicalReaction direction="left-to-right" evidence="1">
        <dbReference type="Rhea" id="RHEA:76160"/>
    </physiologicalReaction>
</comment>
<comment type="activity regulation">
    <text evidence="1">Na(+) is not transported, but it plays an essential structural role and its presence is essential for fluoride channel function.</text>
</comment>
<comment type="subcellular location">
    <subcellularLocation>
        <location evidence="1">Cell inner membrane</location>
        <topology evidence="1">Multi-pass membrane protein</topology>
    </subcellularLocation>
</comment>
<comment type="similarity">
    <text evidence="1">Belongs to the fluoride channel Fluc/FEX (TC 1.A.43) family.</text>
</comment>
<gene>
    <name evidence="1" type="primary">fluC</name>
    <name evidence="1" type="synonym">crcB</name>
    <name type="ordered locus">SF0656</name>
    <name type="ordered locus">S0679</name>
</gene>
<reference key="1">
    <citation type="journal article" date="2002" name="Nucleic Acids Res.">
        <title>Genome sequence of Shigella flexneri 2a: insights into pathogenicity through comparison with genomes of Escherichia coli K12 and O157.</title>
        <authorList>
            <person name="Jin Q."/>
            <person name="Yuan Z."/>
            <person name="Xu J."/>
            <person name="Wang Y."/>
            <person name="Shen Y."/>
            <person name="Lu W."/>
            <person name="Wang J."/>
            <person name="Liu H."/>
            <person name="Yang J."/>
            <person name="Yang F."/>
            <person name="Zhang X."/>
            <person name="Zhang J."/>
            <person name="Yang G."/>
            <person name="Wu H."/>
            <person name="Qu D."/>
            <person name="Dong J."/>
            <person name="Sun L."/>
            <person name="Xue Y."/>
            <person name="Zhao A."/>
            <person name="Gao Y."/>
            <person name="Zhu J."/>
            <person name="Kan B."/>
            <person name="Ding K."/>
            <person name="Chen S."/>
            <person name="Cheng H."/>
            <person name="Yao Z."/>
            <person name="He B."/>
            <person name="Chen R."/>
            <person name="Ma D."/>
            <person name="Qiang B."/>
            <person name="Wen Y."/>
            <person name="Hou Y."/>
            <person name="Yu J."/>
        </authorList>
    </citation>
    <scope>NUCLEOTIDE SEQUENCE [LARGE SCALE GENOMIC DNA]</scope>
    <source>
        <strain>301 / Serotype 2a</strain>
    </source>
</reference>
<reference key="2">
    <citation type="journal article" date="2003" name="Infect. Immun.">
        <title>Complete genome sequence and comparative genomics of Shigella flexneri serotype 2a strain 2457T.</title>
        <authorList>
            <person name="Wei J."/>
            <person name="Goldberg M.B."/>
            <person name="Burland V."/>
            <person name="Venkatesan M.M."/>
            <person name="Deng W."/>
            <person name="Fournier G."/>
            <person name="Mayhew G.F."/>
            <person name="Plunkett G. III"/>
            <person name="Rose D.J."/>
            <person name="Darling A."/>
            <person name="Mau B."/>
            <person name="Perna N.T."/>
            <person name="Payne S.M."/>
            <person name="Runyen-Janecky L.J."/>
            <person name="Zhou S."/>
            <person name="Schwartz D.C."/>
            <person name="Blattner F.R."/>
        </authorList>
    </citation>
    <scope>NUCLEOTIDE SEQUENCE [LARGE SCALE GENOMIC DNA]</scope>
    <source>
        <strain>ATCC 700930 / 2457T / Serotype 2a</strain>
    </source>
</reference>
<sequence length="127" mass="13793">MLQLLLAVFIGGGTGSVARWLLSMRFNPLHQAIPLGTLAANLIGAFIIGMGFAWFSRMTNIDPVWKVLITTGFCGGLTTFSTFSAEVVFLLQEGRFGWALLNVFVNLLGSFAMTALAFWLFSASTVH</sequence>
<name>FLUC_SHIFL</name>
<accession>Q83LX0</accession>
<keyword id="KW-0997">Cell inner membrane</keyword>
<keyword id="KW-1003">Cell membrane</keyword>
<keyword id="KW-0407">Ion channel</keyword>
<keyword id="KW-0406">Ion transport</keyword>
<keyword id="KW-0472">Membrane</keyword>
<keyword id="KW-0479">Metal-binding</keyword>
<keyword id="KW-1185">Reference proteome</keyword>
<keyword id="KW-0915">Sodium</keyword>
<keyword id="KW-0812">Transmembrane</keyword>
<keyword id="KW-1133">Transmembrane helix</keyword>
<keyword id="KW-0813">Transport</keyword>
<proteinExistence type="inferred from homology"/>
<protein>
    <recommendedName>
        <fullName evidence="1">Fluoride-specific ion channel FluC</fullName>
    </recommendedName>
</protein>
<dbReference type="EMBL" id="AE005674">
    <property type="protein sequence ID" value="AAN42292.1"/>
    <property type="molecule type" value="Genomic_DNA"/>
</dbReference>
<dbReference type="EMBL" id="AE014073">
    <property type="protein sequence ID" value="AAP16163.1"/>
    <property type="molecule type" value="Genomic_DNA"/>
</dbReference>
<dbReference type="RefSeq" id="WP_000939741.1">
    <property type="nucleotide sequence ID" value="NZ_WPGW01000002.1"/>
</dbReference>
<dbReference type="SMR" id="Q83LX0"/>
<dbReference type="STRING" id="198214.SF0656"/>
<dbReference type="PaxDb" id="198214-SF0656"/>
<dbReference type="KEGG" id="sfl:SF0656"/>
<dbReference type="KEGG" id="sfx:S0679"/>
<dbReference type="PATRIC" id="fig|198214.7.peg.763"/>
<dbReference type="HOGENOM" id="CLU_114342_3_3_6"/>
<dbReference type="Proteomes" id="UP000001006">
    <property type="component" value="Chromosome"/>
</dbReference>
<dbReference type="Proteomes" id="UP000002673">
    <property type="component" value="Chromosome"/>
</dbReference>
<dbReference type="GO" id="GO:0005886">
    <property type="term" value="C:plasma membrane"/>
    <property type="evidence" value="ECO:0007669"/>
    <property type="project" value="UniProtKB-SubCell"/>
</dbReference>
<dbReference type="GO" id="GO:0062054">
    <property type="term" value="F:fluoride channel activity"/>
    <property type="evidence" value="ECO:0007669"/>
    <property type="project" value="UniProtKB-UniRule"/>
</dbReference>
<dbReference type="GO" id="GO:0046872">
    <property type="term" value="F:metal ion binding"/>
    <property type="evidence" value="ECO:0007669"/>
    <property type="project" value="UniProtKB-KW"/>
</dbReference>
<dbReference type="GO" id="GO:0140114">
    <property type="term" value="P:cellular detoxification of fluoride"/>
    <property type="evidence" value="ECO:0007669"/>
    <property type="project" value="UniProtKB-UniRule"/>
</dbReference>
<dbReference type="HAMAP" id="MF_00454">
    <property type="entry name" value="FluC"/>
    <property type="match status" value="1"/>
</dbReference>
<dbReference type="InterPro" id="IPR003691">
    <property type="entry name" value="FluC"/>
</dbReference>
<dbReference type="NCBIfam" id="TIGR00494">
    <property type="entry name" value="crcB"/>
    <property type="match status" value="1"/>
</dbReference>
<dbReference type="NCBIfam" id="NF010792">
    <property type="entry name" value="PRK14196.1"/>
    <property type="match status" value="1"/>
</dbReference>
<dbReference type="PANTHER" id="PTHR28259">
    <property type="entry name" value="FLUORIDE EXPORT PROTEIN 1-RELATED"/>
    <property type="match status" value="1"/>
</dbReference>
<dbReference type="PANTHER" id="PTHR28259:SF1">
    <property type="entry name" value="FLUORIDE EXPORT PROTEIN 1-RELATED"/>
    <property type="match status" value="1"/>
</dbReference>
<dbReference type="Pfam" id="PF02537">
    <property type="entry name" value="CRCB"/>
    <property type="match status" value="1"/>
</dbReference>
<organism>
    <name type="scientific">Shigella flexneri</name>
    <dbReference type="NCBI Taxonomy" id="623"/>
    <lineage>
        <taxon>Bacteria</taxon>
        <taxon>Pseudomonadati</taxon>
        <taxon>Pseudomonadota</taxon>
        <taxon>Gammaproteobacteria</taxon>
        <taxon>Enterobacterales</taxon>
        <taxon>Enterobacteriaceae</taxon>
        <taxon>Shigella</taxon>
    </lineage>
</organism>
<evidence type="ECO:0000255" key="1">
    <source>
        <dbReference type="HAMAP-Rule" id="MF_00454"/>
    </source>
</evidence>